<protein>
    <recommendedName>
        <fullName>Probable E3 ubiquitin-protein ligase HECTD2</fullName>
        <ecNumber evidence="10">2.3.2.26</ecNumber>
    </recommendedName>
    <alternativeName>
        <fullName>HECT domain-containing protein 2</fullName>
    </alternativeName>
    <alternativeName>
        <fullName>HECT-type E3 ubiquitin transferase HECTD2</fullName>
    </alternativeName>
</protein>
<proteinExistence type="evidence at protein level"/>
<accession>Q5U5R9</accession>
<accession>Q5VZ97</accession>
<accession>Q5VZ98</accession>
<accession>Q5VZ99</accession>
<accession>Q8N1X7</accession>
<accession>Q8TCP5</accession>
<gene>
    <name evidence="8 11" type="primary">HECTD2</name>
</gene>
<evidence type="ECO:0000250" key="1">
    <source>
        <dbReference type="UniProtKB" id="Q8CDU6"/>
    </source>
</evidence>
<evidence type="ECO:0000255" key="2">
    <source>
        <dbReference type="PROSITE-ProRule" id="PRU00104"/>
    </source>
</evidence>
<evidence type="ECO:0000256" key="3">
    <source>
        <dbReference type="SAM" id="MobiDB-lite"/>
    </source>
</evidence>
<evidence type="ECO:0000269" key="4">
    <source>
    </source>
</evidence>
<evidence type="ECO:0000269" key="5">
    <source>
    </source>
</evidence>
<evidence type="ECO:0000269" key="6">
    <source>
    </source>
</evidence>
<evidence type="ECO:0000303" key="7">
    <source>
    </source>
</evidence>
<evidence type="ECO:0000303" key="8">
    <source>
    </source>
</evidence>
<evidence type="ECO:0000305" key="9"/>
<evidence type="ECO:0000305" key="10">
    <source>
    </source>
</evidence>
<evidence type="ECO:0000312" key="11">
    <source>
        <dbReference type="HGNC" id="HGNC:26736"/>
    </source>
</evidence>
<feature type="chain" id="PRO_0000240851" description="Probable E3 ubiquitin-protein ligase HECTD2">
    <location>
        <begin position="1"/>
        <end position="776"/>
    </location>
</feature>
<feature type="domain" description="HECT" evidence="2">
    <location>
        <begin position="437"/>
        <end position="776"/>
    </location>
</feature>
<feature type="region of interest" description="Disordered" evidence="3">
    <location>
        <begin position="1"/>
        <end position="46"/>
    </location>
</feature>
<feature type="compositionally biased region" description="Low complexity" evidence="3">
    <location>
        <begin position="7"/>
        <end position="20"/>
    </location>
</feature>
<feature type="compositionally biased region" description="Basic and acidic residues" evidence="3">
    <location>
        <begin position="21"/>
        <end position="34"/>
    </location>
</feature>
<feature type="active site" description="Glycyl thioester intermediate" evidence="2">
    <location>
        <position position="744"/>
    </location>
</feature>
<feature type="modified residue" description="Phosphoserine" evidence="1">
    <location>
        <position position="9"/>
    </location>
</feature>
<feature type="splice variant" id="VSP_044965" description="In isoform 2." evidence="7">
    <original>PQDVQKT</original>
    <variation>VSIMTCK</variation>
    <location>
        <begin position="201"/>
        <end position="207"/>
    </location>
</feature>
<feature type="splice variant" id="VSP_044966" description="In isoform 2." evidence="7">
    <location>
        <begin position="208"/>
        <end position="776"/>
    </location>
</feature>
<feature type="sequence variant" id="VAR_026836" description="In dbSNP:rs7081569." evidence="4 5">
    <original>P</original>
    <variation>A</variation>
    <location>
        <position position="19"/>
    </location>
</feature>
<feature type="sequence conflict" description="In Ref. 4; AAH40187." evidence="9" ref="4">
    <original>P</original>
    <variation>L</variation>
    <location>
        <position position="85"/>
    </location>
</feature>
<feature type="sequence conflict" description="In Ref. 4; AAH40187." evidence="9" ref="4">
    <original>L</original>
    <variation>F</variation>
    <location>
        <position position="519"/>
    </location>
</feature>
<feature type="sequence conflict" description="In Ref. 4; AAH40187." evidence="9" ref="4">
    <original>D</original>
    <variation>G</variation>
    <location>
        <position position="540"/>
    </location>
</feature>
<name>HECD2_HUMAN</name>
<keyword id="KW-0025">Alternative splicing</keyword>
<keyword id="KW-0597">Phosphoprotein</keyword>
<keyword id="KW-1267">Proteomics identification</keyword>
<keyword id="KW-1185">Reference proteome</keyword>
<keyword id="KW-0808">Transferase</keyword>
<keyword id="KW-0833">Ubl conjugation pathway</keyword>
<organism>
    <name type="scientific">Homo sapiens</name>
    <name type="common">Human</name>
    <dbReference type="NCBI Taxonomy" id="9606"/>
    <lineage>
        <taxon>Eukaryota</taxon>
        <taxon>Metazoa</taxon>
        <taxon>Chordata</taxon>
        <taxon>Craniata</taxon>
        <taxon>Vertebrata</taxon>
        <taxon>Euteleostomi</taxon>
        <taxon>Mammalia</taxon>
        <taxon>Eutheria</taxon>
        <taxon>Euarchontoglires</taxon>
        <taxon>Primates</taxon>
        <taxon>Haplorrhini</taxon>
        <taxon>Catarrhini</taxon>
        <taxon>Hominidae</taxon>
        <taxon>Homo</taxon>
    </lineage>
</organism>
<comment type="function">
    <text evidence="6">E3 ubiquitin-protein ligase which accepts ubiquitin from an E2 ubiquitin-conjugating enzyme in the form of a thioester and then directly transfers the ubiquitin to targeted substrates.</text>
</comment>
<comment type="function">
    <text evidence="6">(Microbial infection) Catalyzes ubiquitination of Botulinum neurotoxin A light chain (LC) of C.botulinum neurotoxin type A (BoNT/A).</text>
</comment>
<comment type="catalytic activity">
    <reaction evidence="10">
        <text>S-ubiquitinyl-[E2 ubiquitin-conjugating enzyme]-L-cysteine + [acceptor protein]-L-lysine = [E2 ubiquitin-conjugating enzyme]-L-cysteine + N(6)-ubiquitinyl-[acceptor protein]-L-lysine.</text>
        <dbReference type="EC" id="2.3.2.26"/>
    </reaction>
</comment>
<comment type="pathway">
    <text evidence="6">Protein modification; protein ubiquitination.</text>
</comment>
<comment type="alternative products">
    <event type="alternative splicing"/>
    <isoform>
        <id>Q5U5R9-1</id>
        <name>1</name>
        <sequence type="displayed"/>
    </isoform>
    <isoform>
        <id>Q5U5R9-2</id>
        <name>2</name>
        <sequence type="described" ref="VSP_044965 VSP_044966"/>
    </isoform>
</comment>
<reference key="1">
    <citation type="journal article" date="2004" name="Nat. Genet.">
        <title>Complete sequencing and characterization of 21,243 full-length human cDNAs.</title>
        <authorList>
            <person name="Ota T."/>
            <person name="Suzuki Y."/>
            <person name="Nishikawa T."/>
            <person name="Otsuki T."/>
            <person name="Sugiyama T."/>
            <person name="Irie R."/>
            <person name="Wakamatsu A."/>
            <person name="Hayashi K."/>
            <person name="Sato H."/>
            <person name="Nagai K."/>
            <person name="Kimura K."/>
            <person name="Makita H."/>
            <person name="Sekine M."/>
            <person name="Obayashi M."/>
            <person name="Nishi T."/>
            <person name="Shibahara T."/>
            <person name="Tanaka T."/>
            <person name="Ishii S."/>
            <person name="Yamamoto J."/>
            <person name="Saito K."/>
            <person name="Kawai Y."/>
            <person name="Isono Y."/>
            <person name="Nakamura Y."/>
            <person name="Nagahari K."/>
            <person name="Murakami K."/>
            <person name="Yasuda T."/>
            <person name="Iwayanagi T."/>
            <person name="Wagatsuma M."/>
            <person name="Shiratori A."/>
            <person name="Sudo H."/>
            <person name="Hosoiri T."/>
            <person name="Kaku Y."/>
            <person name="Kodaira H."/>
            <person name="Kondo H."/>
            <person name="Sugawara M."/>
            <person name="Takahashi M."/>
            <person name="Kanda K."/>
            <person name="Yokoi T."/>
            <person name="Furuya T."/>
            <person name="Kikkawa E."/>
            <person name="Omura Y."/>
            <person name="Abe K."/>
            <person name="Kamihara K."/>
            <person name="Katsuta N."/>
            <person name="Sato K."/>
            <person name="Tanikawa M."/>
            <person name="Yamazaki M."/>
            <person name="Ninomiya K."/>
            <person name="Ishibashi T."/>
            <person name="Yamashita H."/>
            <person name="Murakawa K."/>
            <person name="Fujimori K."/>
            <person name="Tanai H."/>
            <person name="Kimata M."/>
            <person name="Watanabe M."/>
            <person name="Hiraoka S."/>
            <person name="Chiba Y."/>
            <person name="Ishida S."/>
            <person name="Ono Y."/>
            <person name="Takiguchi S."/>
            <person name="Watanabe S."/>
            <person name="Yosida M."/>
            <person name="Hotuta T."/>
            <person name="Kusano J."/>
            <person name="Kanehori K."/>
            <person name="Takahashi-Fujii A."/>
            <person name="Hara H."/>
            <person name="Tanase T.-O."/>
            <person name="Nomura Y."/>
            <person name="Togiya S."/>
            <person name="Komai F."/>
            <person name="Hara R."/>
            <person name="Takeuchi K."/>
            <person name="Arita M."/>
            <person name="Imose N."/>
            <person name="Musashino K."/>
            <person name="Yuuki H."/>
            <person name="Oshima A."/>
            <person name="Sasaki N."/>
            <person name="Aotsuka S."/>
            <person name="Yoshikawa Y."/>
            <person name="Matsunawa H."/>
            <person name="Ichihara T."/>
            <person name="Shiohata N."/>
            <person name="Sano S."/>
            <person name="Moriya S."/>
            <person name="Momiyama H."/>
            <person name="Satoh N."/>
            <person name="Takami S."/>
            <person name="Terashima Y."/>
            <person name="Suzuki O."/>
            <person name="Nakagawa S."/>
            <person name="Senoh A."/>
            <person name="Mizoguchi H."/>
            <person name="Goto Y."/>
            <person name="Shimizu F."/>
            <person name="Wakebe H."/>
            <person name="Hishigaki H."/>
            <person name="Watanabe T."/>
            <person name="Sugiyama A."/>
            <person name="Takemoto M."/>
            <person name="Kawakami B."/>
            <person name="Yamazaki M."/>
            <person name="Watanabe K."/>
            <person name="Kumagai A."/>
            <person name="Itakura S."/>
            <person name="Fukuzumi Y."/>
            <person name="Fujimori Y."/>
            <person name="Komiyama M."/>
            <person name="Tashiro H."/>
            <person name="Tanigami A."/>
            <person name="Fujiwara T."/>
            <person name="Ono T."/>
            <person name="Yamada K."/>
            <person name="Fujii Y."/>
            <person name="Ozaki K."/>
            <person name="Hirao M."/>
            <person name="Ohmori Y."/>
            <person name="Kawabata A."/>
            <person name="Hikiji T."/>
            <person name="Kobatake N."/>
            <person name="Inagaki H."/>
            <person name="Ikema Y."/>
            <person name="Okamoto S."/>
            <person name="Okitani R."/>
            <person name="Kawakami T."/>
            <person name="Noguchi S."/>
            <person name="Itoh T."/>
            <person name="Shigeta K."/>
            <person name="Senba T."/>
            <person name="Matsumura K."/>
            <person name="Nakajima Y."/>
            <person name="Mizuno T."/>
            <person name="Morinaga M."/>
            <person name="Sasaki M."/>
            <person name="Togashi T."/>
            <person name="Oyama M."/>
            <person name="Hata H."/>
            <person name="Watanabe M."/>
            <person name="Komatsu T."/>
            <person name="Mizushima-Sugano J."/>
            <person name="Satoh T."/>
            <person name="Shirai Y."/>
            <person name="Takahashi Y."/>
            <person name="Nakagawa K."/>
            <person name="Okumura K."/>
            <person name="Nagase T."/>
            <person name="Nomura N."/>
            <person name="Kikuchi H."/>
            <person name="Masuho Y."/>
            <person name="Yamashita R."/>
            <person name="Nakai K."/>
            <person name="Yada T."/>
            <person name="Nakamura Y."/>
            <person name="Ohara O."/>
            <person name="Isogai T."/>
            <person name="Sugano S."/>
        </authorList>
    </citation>
    <scope>NUCLEOTIDE SEQUENCE [LARGE SCALE MRNA] (ISOFORM 2)</scope>
    <scope>VARIANT ALA-19</scope>
    <source>
        <tissue>Amygdala</tissue>
    </source>
</reference>
<reference key="2">
    <citation type="journal article" date="2004" name="Nature">
        <title>The DNA sequence and comparative analysis of human chromosome 10.</title>
        <authorList>
            <person name="Deloukas P."/>
            <person name="Earthrowl M.E."/>
            <person name="Grafham D.V."/>
            <person name="Rubenfield M."/>
            <person name="French L."/>
            <person name="Steward C.A."/>
            <person name="Sims S.K."/>
            <person name="Jones M.C."/>
            <person name="Searle S."/>
            <person name="Scott C."/>
            <person name="Howe K."/>
            <person name="Hunt S.E."/>
            <person name="Andrews T.D."/>
            <person name="Gilbert J.G.R."/>
            <person name="Swarbreck D."/>
            <person name="Ashurst J.L."/>
            <person name="Taylor A."/>
            <person name="Battles J."/>
            <person name="Bird C.P."/>
            <person name="Ainscough R."/>
            <person name="Almeida J.P."/>
            <person name="Ashwell R.I.S."/>
            <person name="Ambrose K.D."/>
            <person name="Babbage A.K."/>
            <person name="Bagguley C.L."/>
            <person name="Bailey J."/>
            <person name="Banerjee R."/>
            <person name="Bates K."/>
            <person name="Beasley H."/>
            <person name="Bray-Allen S."/>
            <person name="Brown A.J."/>
            <person name="Brown J.Y."/>
            <person name="Burford D.C."/>
            <person name="Burrill W."/>
            <person name="Burton J."/>
            <person name="Cahill P."/>
            <person name="Camire D."/>
            <person name="Carter N.P."/>
            <person name="Chapman J.C."/>
            <person name="Clark S.Y."/>
            <person name="Clarke G."/>
            <person name="Clee C.M."/>
            <person name="Clegg S."/>
            <person name="Corby N."/>
            <person name="Coulson A."/>
            <person name="Dhami P."/>
            <person name="Dutta I."/>
            <person name="Dunn M."/>
            <person name="Faulkner L."/>
            <person name="Frankish A."/>
            <person name="Frankland J.A."/>
            <person name="Garner P."/>
            <person name="Garnett J."/>
            <person name="Gribble S."/>
            <person name="Griffiths C."/>
            <person name="Grocock R."/>
            <person name="Gustafson E."/>
            <person name="Hammond S."/>
            <person name="Harley J.L."/>
            <person name="Hart E."/>
            <person name="Heath P.D."/>
            <person name="Ho T.P."/>
            <person name="Hopkins B."/>
            <person name="Horne J."/>
            <person name="Howden P.J."/>
            <person name="Huckle E."/>
            <person name="Hynds C."/>
            <person name="Johnson C."/>
            <person name="Johnson D."/>
            <person name="Kana A."/>
            <person name="Kay M."/>
            <person name="Kimberley A.M."/>
            <person name="Kershaw J.K."/>
            <person name="Kokkinaki M."/>
            <person name="Laird G.K."/>
            <person name="Lawlor S."/>
            <person name="Lee H.M."/>
            <person name="Leongamornlert D.A."/>
            <person name="Laird G."/>
            <person name="Lloyd C."/>
            <person name="Lloyd D.M."/>
            <person name="Loveland J."/>
            <person name="Lovell J."/>
            <person name="McLaren S."/>
            <person name="McLay K.E."/>
            <person name="McMurray A."/>
            <person name="Mashreghi-Mohammadi M."/>
            <person name="Matthews L."/>
            <person name="Milne S."/>
            <person name="Nickerson T."/>
            <person name="Nguyen M."/>
            <person name="Overton-Larty E."/>
            <person name="Palmer S.A."/>
            <person name="Pearce A.V."/>
            <person name="Peck A.I."/>
            <person name="Pelan S."/>
            <person name="Phillimore B."/>
            <person name="Porter K."/>
            <person name="Rice C.M."/>
            <person name="Rogosin A."/>
            <person name="Ross M.T."/>
            <person name="Sarafidou T."/>
            <person name="Sehra H.K."/>
            <person name="Shownkeen R."/>
            <person name="Skuce C.D."/>
            <person name="Smith M."/>
            <person name="Standring L."/>
            <person name="Sycamore N."/>
            <person name="Tester J."/>
            <person name="Thorpe A."/>
            <person name="Torcasso W."/>
            <person name="Tracey A."/>
            <person name="Tromans A."/>
            <person name="Tsolas J."/>
            <person name="Wall M."/>
            <person name="Walsh J."/>
            <person name="Wang H."/>
            <person name="Weinstock K."/>
            <person name="West A.P."/>
            <person name="Willey D.L."/>
            <person name="Whitehead S.L."/>
            <person name="Wilming L."/>
            <person name="Wray P.W."/>
            <person name="Young L."/>
            <person name="Chen Y."/>
            <person name="Lovering R.C."/>
            <person name="Moschonas N.K."/>
            <person name="Siebert R."/>
            <person name="Fechtel K."/>
            <person name="Bentley D."/>
            <person name="Durbin R.M."/>
            <person name="Hubbard T."/>
            <person name="Doucette-Stamm L."/>
            <person name="Beck S."/>
            <person name="Smith D.R."/>
            <person name="Rogers J."/>
        </authorList>
    </citation>
    <scope>NUCLEOTIDE SEQUENCE [LARGE SCALE GENOMIC DNA]</scope>
</reference>
<reference key="3">
    <citation type="submission" date="2005-09" db="EMBL/GenBank/DDBJ databases">
        <authorList>
            <person name="Mural R.J."/>
            <person name="Istrail S."/>
            <person name="Sutton G."/>
            <person name="Florea L."/>
            <person name="Halpern A.L."/>
            <person name="Mobarry C.M."/>
            <person name="Lippert R."/>
            <person name="Walenz B."/>
            <person name="Shatkay H."/>
            <person name="Dew I."/>
            <person name="Miller J.R."/>
            <person name="Flanigan M.J."/>
            <person name="Edwards N.J."/>
            <person name="Bolanos R."/>
            <person name="Fasulo D."/>
            <person name="Halldorsson B.V."/>
            <person name="Hannenhalli S."/>
            <person name="Turner R."/>
            <person name="Yooseph S."/>
            <person name="Lu F."/>
            <person name="Nusskern D.R."/>
            <person name="Shue B.C."/>
            <person name="Zheng X.H."/>
            <person name="Zhong F."/>
            <person name="Delcher A.L."/>
            <person name="Huson D.H."/>
            <person name="Kravitz S.A."/>
            <person name="Mouchard L."/>
            <person name="Reinert K."/>
            <person name="Remington K.A."/>
            <person name="Clark A.G."/>
            <person name="Waterman M.S."/>
            <person name="Eichler E.E."/>
            <person name="Adams M.D."/>
            <person name="Hunkapiller M.W."/>
            <person name="Myers E.W."/>
            <person name="Venter J.C."/>
        </authorList>
    </citation>
    <scope>NUCLEOTIDE SEQUENCE [LARGE SCALE GENOMIC DNA]</scope>
</reference>
<reference key="4">
    <citation type="journal article" date="2004" name="Genome Res.">
        <title>The status, quality, and expansion of the NIH full-length cDNA project: the Mammalian Gene Collection (MGC).</title>
        <authorList>
            <consortium name="The MGC Project Team"/>
        </authorList>
    </citation>
    <scope>NUCLEOTIDE SEQUENCE [LARGE SCALE MRNA] (ISOFORM 1)</scope>
    <scope>VARIANT ALA-19</scope>
    <source>
        <tissue>Brain</tissue>
    </source>
</reference>
<reference key="5">
    <citation type="journal article" date="2007" name="BMC Genomics">
        <title>The full-ORF clone resource of the German cDNA consortium.</title>
        <authorList>
            <person name="Bechtel S."/>
            <person name="Rosenfelder H."/>
            <person name="Duda A."/>
            <person name="Schmidt C.P."/>
            <person name="Ernst U."/>
            <person name="Wellenreuther R."/>
            <person name="Mehrle A."/>
            <person name="Schuster C."/>
            <person name="Bahr A."/>
            <person name="Bloecker H."/>
            <person name="Heubner D."/>
            <person name="Hoerlein A."/>
            <person name="Michel G."/>
            <person name="Wedler H."/>
            <person name="Koehrer K."/>
            <person name="Ottenwaelder B."/>
            <person name="Poustka A."/>
            <person name="Wiemann S."/>
            <person name="Schupp I."/>
        </authorList>
    </citation>
    <scope>NUCLEOTIDE SEQUENCE [LARGE SCALE MRNA] OF 541-776 (ISOFORM 1)</scope>
    <source>
        <tissue>Amygdala</tissue>
    </source>
</reference>
<reference key="6">
    <citation type="journal article" date="2017" name="Proc. Natl. Acad. Sci. U.S.A.">
        <title>Deubiquitinating enzyme VCIP135 dictates the duration of botulinum neurotoxin type A intoxication.</title>
        <authorList>
            <person name="Tsai Y.C."/>
            <person name="Kotiya A."/>
            <person name="Kiris E."/>
            <person name="Yang M."/>
            <person name="Bavari S."/>
            <person name="Tessarollo L."/>
            <person name="Oyler G.A."/>
            <person name="Weissman A.M."/>
        </authorList>
    </citation>
    <scope>FUNCTION</scope>
    <scope>FUNCTION (MICROBIAL INFECTION)</scope>
    <scope>CATALYTIC ACTIVITY</scope>
</reference>
<dbReference type="EC" id="2.3.2.26" evidence="10"/>
<dbReference type="EMBL" id="AK094625">
    <property type="protein sequence ID" value="BAC04388.1"/>
    <property type="molecule type" value="mRNA"/>
</dbReference>
<dbReference type="EMBL" id="AC023902">
    <property type="status" value="NOT_ANNOTATED_CDS"/>
    <property type="molecule type" value="Genomic_DNA"/>
</dbReference>
<dbReference type="EMBL" id="AL161798">
    <property type="status" value="NOT_ANNOTATED_CDS"/>
    <property type="molecule type" value="Genomic_DNA"/>
</dbReference>
<dbReference type="EMBL" id="CH471066">
    <property type="protein sequence ID" value="EAW50111.1"/>
    <property type="molecule type" value="Genomic_DNA"/>
</dbReference>
<dbReference type="EMBL" id="BC040187">
    <property type="protein sequence ID" value="AAH40187.1"/>
    <property type="molecule type" value="mRNA"/>
</dbReference>
<dbReference type="EMBL" id="AL713675">
    <property type="protein sequence ID" value="CAD28480.1"/>
    <property type="molecule type" value="mRNA"/>
</dbReference>
<dbReference type="CCDS" id="CCDS7414.1">
    <molecule id="Q5U5R9-1"/>
</dbReference>
<dbReference type="CCDS" id="CCDS7415.1">
    <molecule id="Q5U5R9-2"/>
</dbReference>
<dbReference type="RefSeq" id="NP_001271203.1">
    <property type="nucleotide sequence ID" value="NM_001284274.2"/>
</dbReference>
<dbReference type="RefSeq" id="NP_775768.4">
    <molecule id="Q5U5R9-2"/>
    <property type="nucleotide sequence ID" value="NM_173497.4"/>
</dbReference>
<dbReference type="RefSeq" id="NP_877497.4">
    <molecule id="Q5U5R9-1"/>
    <property type="nucleotide sequence ID" value="NM_182765.6"/>
</dbReference>
<dbReference type="SMR" id="Q5U5R9"/>
<dbReference type="BioGRID" id="126794">
    <property type="interactions" value="13"/>
</dbReference>
<dbReference type="FunCoup" id="Q5U5R9">
    <property type="interactions" value="797"/>
</dbReference>
<dbReference type="IntAct" id="Q5U5R9">
    <property type="interactions" value="5"/>
</dbReference>
<dbReference type="STRING" id="9606.ENSP00000401023"/>
<dbReference type="iPTMnet" id="Q5U5R9"/>
<dbReference type="PhosphoSitePlus" id="Q5U5R9"/>
<dbReference type="BioMuta" id="HECTD2"/>
<dbReference type="DMDM" id="109892196"/>
<dbReference type="MassIVE" id="Q5U5R9"/>
<dbReference type="PaxDb" id="9606-ENSP00000401023"/>
<dbReference type="PeptideAtlas" id="Q5U5R9"/>
<dbReference type="ProteomicsDB" id="65231">
    <molecule id="Q5U5R9-1"/>
</dbReference>
<dbReference type="ProteomicsDB" id="65686"/>
<dbReference type="Antibodypedia" id="30347">
    <property type="antibodies" value="183 antibodies from 25 providers"/>
</dbReference>
<dbReference type="DNASU" id="143279"/>
<dbReference type="Ensembl" id="ENST00000298068.10">
    <molecule id="Q5U5R9-1"/>
    <property type="protein sequence ID" value="ENSP00000298068.5"/>
    <property type="gene ID" value="ENSG00000165338.17"/>
</dbReference>
<dbReference type="Ensembl" id="ENST00000371681.8">
    <molecule id="Q5U5R9-2"/>
    <property type="protein sequence ID" value="ENSP00000360746.4"/>
    <property type="gene ID" value="ENSG00000165338.17"/>
</dbReference>
<dbReference type="GeneID" id="143279"/>
<dbReference type="KEGG" id="hsa:143279"/>
<dbReference type="MANE-Select" id="ENST00000298068.10">
    <property type="protein sequence ID" value="ENSP00000298068.5"/>
    <property type="RefSeq nucleotide sequence ID" value="NM_182765.6"/>
    <property type="RefSeq protein sequence ID" value="NP_877497.4"/>
</dbReference>
<dbReference type="UCSC" id="uc001khk.4">
    <molecule id="Q5U5R9-1"/>
    <property type="organism name" value="human"/>
</dbReference>
<dbReference type="AGR" id="HGNC:26736"/>
<dbReference type="CTD" id="143279"/>
<dbReference type="DisGeNET" id="143279"/>
<dbReference type="GeneCards" id="HECTD2"/>
<dbReference type="HGNC" id="HGNC:26736">
    <property type="gene designation" value="HECTD2"/>
</dbReference>
<dbReference type="HPA" id="ENSG00000165338">
    <property type="expression patterns" value="Low tissue specificity"/>
</dbReference>
<dbReference type="MIM" id="620876">
    <property type="type" value="gene"/>
</dbReference>
<dbReference type="neXtProt" id="NX_Q5U5R9"/>
<dbReference type="OpenTargets" id="ENSG00000165338"/>
<dbReference type="PharmGKB" id="PA134933711"/>
<dbReference type="VEuPathDB" id="HostDB:ENSG00000165338"/>
<dbReference type="eggNOG" id="KOG0941">
    <property type="taxonomic scope" value="Eukaryota"/>
</dbReference>
<dbReference type="GeneTree" id="ENSGT00940000157750"/>
<dbReference type="HOGENOM" id="CLU_1325997_0_0_1"/>
<dbReference type="InParanoid" id="Q5U5R9"/>
<dbReference type="OMA" id="DLMSEYY"/>
<dbReference type="OrthoDB" id="5981550at2759"/>
<dbReference type="PAN-GO" id="Q5U5R9">
    <property type="GO annotations" value="1 GO annotation based on evolutionary models"/>
</dbReference>
<dbReference type="PhylomeDB" id="Q5U5R9"/>
<dbReference type="TreeFam" id="TF315189"/>
<dbReference type="PathwayCommons" id="Q5U5R9"/>
<dbReference type="Reactome" id="R-HSA-983168">
    <property type="pathway name" value="Antigen processing: Ubiquitination &amp; Proteasome degradation"/>
</dbReference>
<dbReference type="SignaLink" id="Q5U5R9"/>
<dbReference type="SIGNOR" id="Q5U5R9"/>
<dbReference type="UniPathway" id="UPA00143"/>
<dbReference type="BioGRID-ORCS" id="143279">
    <property type="hits" value="38 hits in 1198 CRISPR screens"/>
</dbReference>
<dbReference type="ChiTaRS" id="HECTD2">
    <property type="organism name" value="human"/>
</dbReference>
<dbReference type="GenomeRNAi" id="143279"/>
<dbReference type="Pharos" id="Q5U5R9">
    <property type="development level" value="Tbio"/>
</dbReference>
<dbReference type="PRO" id="PR:Q5U5R9"/>
<dbReference type="Proteomes" id="UP000005640">
    <property type="component" value="Chromosome 10"/>
</dbReference>
<dbReference type="RNAct" id="Q5U5R9">
    <property type="molecule type" value="protein"/>
</dbReference>
<dbReference type="Bgee" id="ENSG00000165338">
    <property type="expression patterns" value="Expressed in calcaneal tendon and 183 other cell types or tissues"/>
</dbReference>
<dbReference type="ExpressionAtlas" id="Q5U5R9">
    <property type="expression patterns" value="baseline and differential"/>
</dbReference>
<dbReference type="GO" id="GO:0005829">
    <property type="term" value="C:cytosol"/>
    <property type="evidence" value="ECO:0000304"/>
    <property type="project" value="Reactome"/>
</dbReference>
<dbReference type="GO" id="GO:0061630">
    <property type="term" value="F:ubiquitin protein ligase activity"/>
    <property type="evidence" value="ECO:0000318"/>
    <property type="project" value="GO_Central"/>
</dbReference>
<dbReference type="GO" id="GO:0000209">
    <property type="term" value="P:protein polyubiquitination"/>
    <property type="evidence" value="ECO:0007669"/>
    <property type="project" value="InterPro"/>
</dbReference>
<dbReference type="CDD" id="cd00078">
    <property type="entry name" value="HECTc"/>
    <property type="match status" value="1"/>
</dbReference>
<dbReference type="FunFam" id="3.30.2410.10:FF:000009">
    <property type="entry name" value="Probable E3 ubiquitin-protein ligase HECTD2"/>
    <property type="match status" value="1"/>
</dbReference>
<dbReference type="FunFam" id="3.90.1750.10:FF:000023">
    <property type="entry name" value="probable E3 ubiquitin-protein ligase HECTD2 isoform X2"/>
    <property type="match status" value="1"/>
</dbReference>
<dbReference type="FunFam" id="3.30.2160.10:FF:000004">
    <property type="entry name" value="probable E3 ubiquitin-protein ligase HERC4 isoform X1"/>
    <property type="match status" value="1"/>
</dbReference>
<dbReference type="Gene3D" id="3.30.2160.10">
    <property type="entry name" value="Hect, E3 ligase catalytic domain"/>
    <property type="match status" value="1"/>
</dbReference>
<dbReference type="Gene3D" id="3.30.2410.10">
    <property type="entry name" value="Hect, E3 ligase catalytic domain"/>
    <property type="match status" value="1"/>
</dbReference>
<dbReference type="Gene3D" id="3.90.1750.10">
    <property type="entry name" value="Hect, E3 ligase catalytic domains"/>
    <property type="match status" value="1"/>
</dbReference>
<dbReference type="InterPro" id="IPR044611">
    <property type="entry name" value="E3A/B/C-like"/>
</dbReference>
<dbReference type="InterPro" id="IPR000569">
    <property type="entry name" value="HECT_dom"/>
</dbReference>
<dbReference type="InterPro" id="IPR035983">
    <property type="entry name" value="Hect_E3_ubiquitin_ligase"/>
</dbReference>
<dbReference type="PANTHER" id="PTHR45700:SF9">
    <property type="entry name" value="HECT-TYPE E3 UBIQUITIN TRANSFERASE"/>
    <property type="match status" value="1"/>
</dbReference>
<dbReference type="PANTHER" id="PTHR45700">
    <property type="entry name" value="UBIQUITIN-PROTEIN LIGASE E3C"/>
    <property type="match status" value="1"/>
</dbReference>
<dbReference type="Pfam" id="PF00632">
    <property type="entry name" value="HECT"/>
    <property type="match status" value="1"/>
</dbReference>
<dbReference type="SMART" id="SM00119">
    <property type="entry name" value="HECTc"/>
    <property type="match status" value="1"/>
</dbReference>
<dbReference type="SUPFAM" id="SSF56204">
    <property type="entry name" value="Hect, E3 ligase catalytic domain"/>
    <property type="match status" value="1"/>
</dbReference>
<dbReference type="PROSITE" id="PS50237">
    <property type="entry name" value="HECT"/>
    <property type="match status" value="1"/>
</dbReference>
<sequence>MSEAVRVPSPATPLVVAAPAPEERKGKESEREKLPPIVSAGAGATAGLDRGAKGQISTFSSFISAVSPKKEAAENRSSPAHLVFPNIKNVREPPPICLDVRQKQRTSMDASSSEMKAPVLPEPILPIQPKTVKDFQEDVEKVKSSGDWKAVHDFYLTTFDSFPELNAAFKKDATASFNTIEDSGINAKFVNAVYDTLLNTPQDVQKTVLKGIINSLLREWKGPRTKDDLRAYFILLQNPQFNNTSTYVIYAHLLRQIATLVEADHHFLVHWFKKLSQKRFKQLVERLLQFISLRLFPAKPEEFPPITKCSWWIPSAAKVLALLNTANNLVHPPLIPYTDFYNSTLDHIDLMEEYHTWQNFGNSHRFSFCQYPFVISVAAKKIIIQRDSEQQMINIARQSLVDKVSRRQRPDMNILFLNMKVRRTHLVSDSLDELTRKRADLKKKLKVTFVGEAGLDMGGLTKEWFLLLIRQIFHPDYGMFTYHKDSHCHWFSSFKCDNYSEFRLVGILMGLAVYNSITLDIRFPPCCYKKLLSPPIIPSDQNIPVGICNVTVDDLCQIMPELAHGLSELLSHEGNVEEDFYSTFQVFQEEFGIIKSYNLKPGGDKISVTNQNRKEYVQLYTDFLLNKSIYKQFAAFYYGFHSVCASNALMLLRPEEVEILVCGSPDLDMHALQRSTQYDGYAKTDLTIKYFWDVVLGFPLDLQKKLLHFTTGSDRVPVGGMADLNFKISKNETSTNCLPVAHTCFNQLCLPPYKSKKDLKQKLIIGISNSEGFGLE</sequence>